<comment type="function">
    <text evidence="2 3 4">Probably participates in a plant defense mechanism. Has antibiotic activity. Has a diuretic effect. Has a uterotonic effect in humans. Active against the Gram-positive S.aureus with a minimum inhibition concentration of approximately 0.2 microM. Relatively ineffective against Gram-negative bacteria such as E.coli and P.aeruginosa. Inhibitory effect on the growth and development of larvae from H.punctigera. The unmodified form has hemolytic activity, the oxidized form lacks hemolytic activity. If the protein is linearized, hemolytic activity is lost.</text>
</comment>
<comment type="tissue specificity">
    <text>Leaves and stems. Lower in roots.</text>
</comment>
<comment type="domain">
    <text>The presence of a 'disulfide through disulfide knot' structurally defines this protein as a knottin.</text>
</comment>
<comment type="PTM">
    <text evidence="4">Kalata-B1 is a cyclic peptide which occurs in three forms: with unmodified Trp-111, with Trp-111 oxidized to form oxindolylalanine and with Trp-111 oxidized to form N-formylkynurenine. Oxidation is enhanced by exposure to sunlight.</text>
</comment>
<comment type="mass spectrometry"/>
<comment type="mass spectrometry"/>
<comment type="mass spectrometry">
    <text>With oxindolylalanine.</text>
</comment>
<comment type="mass spectrometry">
    <text>With N-formylkynurenine.</text>
</comment>
<comment type="pharmaceutical">
    <text>The uteroactive properties of Kalata have been discovered by African traditional medicine. It is used as an ingredient of a herbal tea to accelerate childbirth.</text>
</comment>
<comment type="similarity">
    <text evidence="2">Belongs to the cyclotide family. Moebius subfamily.</text>
</comment>
<comment type="caution">
    <text evidence="6">The oxidation forms of Trp-111 are subject of controversy and could be the artifactual results of sample handling.</text>
</comment>
<comment type="online information" name="Protein Spotlight">
    <link uri="https://www.proteinspotlight.org/back_issues/020"/>
    <text>The protein with a topological twist - Issue 20 of March 2002</text>
</comment>
<comment type="online information" name="Protein Spotlight">
    <link uri="https://www.proteinspotlight.org/back_issues/053/"/>
    <text>Bio-Art - Issue 53 of December 2004</text>
</comment>
<sequence>MAKFTVCLLLCLLLAAFVGAFGSELSDSHKTTLVNEIAEKMLQRKILDGVEATLVTDVAEKMFLRKMKAEAKTSETADQVFLKQLQLKGLPVCGETCVGGTCNTPGCTCSWPVCTRNGLPSLAA</sequence>
<proteinExistence type="evidence at protein level"/>
<reference key="1">
    <citation type="journal article" date="2001" name="Proc. Natl. Acad. Sci. U.S.A.">
        <title>Biosynthesis and insecticidal properties of plant cyclotides: the cyclic knotted proteins from Oldenlandia affinis.</title>
        <authorList>
            <person name="Jennings C.V."/>
            <person name="West J."/>
            <person name="Waine C."/>
            <person name="Craik D.J."/>
            <person name="Anderson M.A."/>
        </authorList>
    </citation>
    <scope>NUCLEOTIDE SEQUENCE [MRNA]</scope>
</reference>
<reference key="2">
    <citation type="journal article" date="1995" name="Biochemistry">
        <title>Elucidation of the primary and three-dimensional structure of the uterotonic polypeptide kalata B1.</title>
        <authorList>
            <person name="Saether O."/>
            <person name="Craik D.J."/>
            <person name="Campbell I.D."/>
            <person name="Sletten K."/>
            <person name="Juul J."/>
            <person name="Norman D.G."/>
        </authorList>
    </citation>
    <scope>PROTEIN SEQUENCE OF 89-117</scope>
    <scope>MASS SPECTROMETRY</scope>
    <scope>STRUCTURE BY NMR OF 89-109</scope>
    <scope>DISULFIDE BONDS</scope>
</reference>
<reference key="3">
    <citation type="journal article" date="2007" name="ChemBioChem">
        <title>The cyclotide fingerprint in Oldenlandia affinis: elucidation of chemically modified, linear and novel macrocyclic peptides.</title>
        <authorList>
            <person name="Plan M.R.R."/>
            <person name="Goeransson U."/>
            <person name="Clark R.J."/>
            <person name="Daly N.L."/>
            <person name="Colgrave M.L."/>
            <person name="Craik D.J."/>
        </authorList>
    </citation>
    <scope>PROTEIN SEQUENCE OF 89-117</scope>
    <scope>FUNCTION</scope>
    <scope>MASS SPECTROMETRY</scope>
    <scope>OXIDATION</scope>
</reference>
<reference key="4">
    <citation type="journal article" date="1999" name="Proc. Natl. Acad. Sci. U.S.A.">
        <title>An unusual structural motif of antimicrobial peptides containing end-to-end macrocycle and cystine-knot disulfides.</title>
        <authorList>
            <person name="Tam J.P."/>
            <person name="Lu Y.-A."/>
            <person name="Yang J.-L."/>
            <person name="Chiu K.-W."/>
        </authorList>
    </citation>
    <scope>SYNTHESIS OF 89-117</scope>
    <scope>ANTIBACTERIAL ACTIVITY</scope>
</reference>
<reference key="5">
    <citation type="journal article" date="2002" name="Arch. Biochem. Biophys.">
        <title>Refined structure and metal binding site of the kalata B1 peptide.</title>
        <authorList>
            <person name="Skjeldal L."/>
            <person name="Gran L."/>
            <person name="Sletten K."/>
            <person name="Volkman B.F."/>
        </authorList>
    </citation>
    <scope>STRUCTURE BY NMR OF 89-117</scope>
</reference>
<reference key="6">
    <citation type="journal article" date="2003" name="J. Biol. Chem.">
        <title>Disulfide folding pathways of cystine knot proteins. Tying the knot within the circular backbone of the cyclotides.</title>
        <authorList>
            <person name="Daly N.L."/>
            <person name="Clark R.J."/>
            <person name="Craik D.J."/>
        </authorList>
    </citation>
    <scope>STRUCTURE BY NMR OF 89-117</scope>
</reference>
<reference key="7">
    <citation type="journal article" date="2003" name="J. Biol. Chem.">
        <title>Twists, knots, and rings in proteins. Structural definition of the cyclotide framework.</title>
        <authorList>
            <person name="Rosengren K.J."/>
            <person name="Daly N.L."/>
            <person name="Plan M.R.R."/>
            <person name="Waine C."/>
            <person name="Craik D.J."/>
        </authorList>
    </citation>
    <scope>STRUCTURE BY NMR OF 89-117</scope>
</reference>
<reference key="8">
    <citation type="journal article" date="2003" name="Biochemistry">
        <title>Linearization of a naturally occurring circular protein maintains structure but eliminates hemolytic activity.</title>
        <authorList>
            <person name="Barry D.G."/>
            <person name="Daly N.L."/>
            <person name="Clark R.J."/>
            <person name="Sando L."/>
            <person name="Craik D.J."/>
        </authorList>
    </citation>
    <scope>STRUCTURE BY NMR OF 92-115</scope>
    <scope>FUNCTION</scope>
</reference>
<gene>
    <name type="primary">OAK1</name>
</gene>
<dbReference type="EMBL" id="AF393825">
    <property type="protein sequence ID" value="AAL05477.1"/>
    <property type="molecule type" value="mRNA"/>
</dbReference>
<dbReference type="PDB" id="1JJZ">
    <property type="method" value="NMR"/>
    <property type="chains" value="A=89-116"/>
</dbReference>
<dbReference type="PDB" id="1K48">
    <property type="method" value="NMR"/>
    <property type="chains" value="A=89-116"/>
</dbReference>
<dbReference type="PDB" id="1KAL">
    <property type="method" value="NMR"/>
    <property type="chains" value="A=110-120"/>
</dbReference>
<dbReference type="PDB" id="1N1U">
    <property type="method" value="NMR"/>
    <property type="chains" value="A=94-120"/>
</dbReference>
<dbReference type="PDB" id="1NB1">
    <property type="method" value="NMR"/>
    <property type="chains" value="A=93-120"/>
</dbReference>
<dbReference type="PDB" id="1ORX">
    <property type="method" value="NMR"/>
    <property type="chains" value="A=92-115"/>
</dbReference>
<dbReference type="PDB" id="2F2I">
    <property type="method" value="NMR"/>
    <property type="chains" value="A=93-121"/>
</dbReference>
<dbReference type="PDB" id="2F2J">
    <property type="method" value="NMR"/>
    <property type="chains" value="A=93-121"/>
</dbReference>
<dbReference type="PDB" id="2JUE">
    <property type="method" value="NMR"/>
    <property type="chains" value="A=94-121"/>
</dbReference>
<dbReference type="PDB" id="2KHB">
    <property type="method" value="NMR"/>
    <property type="chains" value="A=89-117"/>
</dbReference>
<dbReference type="PDB" id="2MH1">
    <property type="method" value="NMR"/>
    <property type="chains" value="A=93-120"/>
</dbReference>
<dbReference type="PDB" id="2MN1">
    <property type="method" value="NMR"/>
    <property type="chains" value="A=89-117"/>
</dbReference>
<dbReference type="PDB" id="4TTM">
    <property type="method" value="X-ray"/>
    <property type="resolution" value="1.90 A"/>
    <property type="chains" value="A=89-117"/>
</dbReference>
<dbReference type="PDB" id="4TTN">
    <property type="method" value="X-ray"/>
    <property type="resolution" value="1.25 A"/>
    <property type="chains" value="A=89-117"/>
</dbReference>
<dbReference type="PDB" id="4TTO">
    <property type="method" value="X-ray"/>
    <property type="resolution" value="2.30 A"/>
    <property type="chains" value="A=89-117"/>
</dbReference>
<dbReference type="PDB" id="7LHC">
    <property type="method" value="NMR"/>
    <property type="chains" value="A=89-117"/>
</dbReference>
<dbReference type="PDB" id="8TYI">
    <property type="method" value="NMR"/>
    <property type="chains" value="A=89-117"/>
</dbReference>
<dbReference type="PDBsum" id="1JJZ"/>
<dbReference type="PDBsum" id="1K48"/>
<dbReference type="PDBsum" id="1KAL"/>
<dbReference type="PDBsum" id="1N1U"/>
<dbReference type="PDBsum" id="1NB1"/>
<dbReference type="PDBsum" id="1ORX"/>
<dbReference type="PDBsum" id="2F2I"/>
<dbReference type="PDBsum" id="2F2J"/>
<dbReference type="PDBsum" id="2JUE"/>
<dbReference type="PDBsum" id="2KHB"/>
<dbReference type="PDBsum" id="2MH1"/>
<dbReference type="PDBsum" id="2MN1"/>
<dbReference type="PDBsum" id="4TTM"/>
<dbReference type="PDBsum" id="4TTN"/>
<dbReference type="PDBsum" id="4TTO"/>
<dbReference type="PDBsum" id="7LHC"/>
<dbReference type="PDBsum" id="8TYI"/>
<dbReference type="BMRB" id="P56254"/>
<dbReference type="SMR" id="P56254"/>
<dbReference type="TCDB" id="1.A.118.1.1">
    <property type="family name" value="the plant cycltide (cyclotide) family"/>
</dbReference>
<dbReference type="EvolutionaryTrace" id="P56254"/>
<dbReference type="GO" id="GO:0042742">
    <property type="term" value="P:defense response to bacterium"/>
    <property type="evidence" value="ECO:0007669"/>
    <property type="project" value="UniProtKB-KW"/>
</dbReference>
<dbReference type="GO" id="GO:0031640">
    <property type="term" value="P:killing of cells of another organism"/>
    <property type="evidence" value="ECO:0007669"/>
    <property type="project" value="UniProtKB-KW"/>
</dbReference>
<dbReference type="DisProt" id="DP01017"/>
<dbReference type="InterPro" id="IPR005535">
    <property type="entry name" value="Cyclotide"/>
</dbReference>
<dbReference type="InterPro" id="IPR012324">
    <property type="entry name" value="Cyclotide_moebius_CS"/>
</dbReference>
<dbReference type="InterPro" id="IPR036146">
    <property type="entry name" value="Cyclotide_sf"/>
</dbReference>
<dbReference type="Pfam" id="PF03784">
    <property type="entry name" value="Cyclotide"/>
    <property type="match status" value="1"/>
</dbReference>
<dbReference type="SUPFAM" id="SSF57038">
    <property type="entry name" value="Cyclotides"/>
    <property type="match status" value="1"/>
</dbReference>
<dbReference type="PROSITE" id="PS51052">
    <property type="entry name" value="CYCLOTIDE"/>
    <property type="match status" value="1"/>
</dbReference>
<dbReference type="PROSITE" id="PS60009">
    <property type="entry name" value="CYCLOTIDE_MOEBIUS"/>
    <property type="match status" value="1"/>
</dbReference>
<accession>P56254</accession>
<keyword id="KW-0002">3D-structure</keyword>
<keyword id="KW-0044">Antibiotic</keyword>
<keyword id="KW-0929">Antimicrobial</keyword>
<keyword id="KW-0204">Cytolysis</keyword>
<keyword id="KW-0903">Direct protein sequencing</keyword>
<keyword id="KW-1015">Disulfide bond</keyword>
<keyword id="KW-0354">Hemolysis</keyword>
<keyword id="KW-0960">Knottin</keyword>
<keyword id="KW-0582">Pharmaceutical</keyword>
<keyword id="KW-0611">Plant defense</keyword>
<keyword id="KW-0732">Signal</keyword>
<feature type="signal peptide" evidence="1">
    <location>
        <begin position="1"/>
        <end position="22"/>
    </location>
</feature>
<feature type="propeptide" id="PRO_0000006617">
    <location>
        <begin position="23"/>
        <end position="88"/>
    </location>
</feature>
<feature type="peptide" id="PRO_0000006618" description="Kalata-B1">
    <location>
        <begin position="89"/>
        <end position="117"/>
    </location>
</feature>
<feature type="propeptide" id="PRO_0000006619">
    <location>
        <begin position="118"/>
        <end position="124"/>
    </location>
</feature>
<feature type="disulfide bond" evidence="2 5">
    <location>
        <begin position="93"/>
        <end position="107"/>
    </location>
</feature>
<feature type="disulfide bond" evidence="2 5">
    <location>
        <begin position="97"/>
        <end position="109"/>
    </location>
</feature>
<feature type="disulfide bond" evidence="2 5">
    <location>
        <begin position="102"/>
        <end position="114"/>
    </location>
</feature>
<feature type="cross-link" description="Cyclopeptide (Gly-Asn)">
    <location>
        <begin position="89"/>
        <end position="117"/>
    </location>
</feature>
<feature type="strand" evidence="9">
    <location>
        <begin position="93"/>
        <end position="96"/>
    </location>
</feature>
<feature type="strand" evidence="7">
    <location>
        <begin position="98"/>
        <end position="100"/>
    </location>
</feature>
<feature type="strand" evidence="8">
    <location>
        <begin position="104"/>
        <end position="106"/>
    </location>
</feature>
<feature type="strand" evidence="9">
    <location>
        <begin position="108"/>
        <end position="110"/>
    </location>
</feature>
<feature type="strand" evidence="9">
    <location>
        <begin position="113"/>
        <end position="116"/>
    </location>
</feature>
<protein>
    <recommendedName>
        <fullName>Kalata-B1</fullName>
    </recommendedName>
</protein>
<evidence type="ECO:0000255" key="1"/>
<evidence type="ECO:0000255" key="2">
    <source>
        <dbReference type="PROSITE-ProRule" id="PRU00395"/>
    </source>
</evidence>
<evidence type="ECO:0000269" key="3">
    <source>
    </source>
</evidence>
<evidence type="ECO:0000269" key="4">
    <source>
    </source>
</evidence>
<evidence type="ECO:0000269" key="5">
    <source>
    </source>
</evidence>
<evidence type="ECO:0000305" key="6">
    <source>
    </source>
</evidence>
<evidence type="ECO:0007829" key="7">
    <source>
        <dbReference type="PDB" id="1JJZ"/>
    </source>
</evidence>
<evidence type="ECO:0007829" key="8">
    <source>
        <dbReference type="PDB" id="1K48"/>
    </source>
</evidence>
<evidence type="ECO:0007829" key="9">
    <source>
        <dbReference type="PDB" id="4TTN"/>
    </source>
</evidence>
<name>KAB1_OLDAF</name>
<organism>
    <name type="scientific">Oldenlandia affinis</name>
    <dbReference type="NCBI Taxonomy" id="60225"/>
    <lineage>
        <taxon>Eukaryota</taxon>
        <taxon>Viridiplantae</taxon>
        <taxon>Streptophyta</taxon>
        <taxon>Embryophyta</taxon>
        <taxon>Tracheophyta</taxon>
        <taxon>Spermatophyta</taxon>
        <taxon>Magnoliopsida</taxon>
        <taxon>eudicotyledons</taxon>
        <taxon>Gunneridae</taxon>
        <taxon>Pentapetalae</taxon>
        <taxon>asterids</taxon>
        <taxon>lamiids</taxon>
        <taxon>Gentianales</taxon>
        <taxon>Rubiaceae</taxon>
        <taxon>Rubioideae</taxon>
        <taxon>Spermacoceae</taxon>
        <taxon>Hedyotis-Oldenlandia complex</taxon>
        <taxon>Oldenlandia</taxon>
    </lineage>
</organism>